<name>TSAD_PELUB</name>
<sequence length="357" mass="38795">MNKKPIILGIESSCDETAASIITENEQGMPTILSSIVSSQVDVHKEFGGVVPELAARSHMEKIDLITKKAFDKSGVKMEDLDAIAATAGPGLMVCLSVGLSFGKAMASSLNKPFIAVNHLEGHALSPKLNSELNYPYLLLLISGGHTQFLSVQGLGNYKRLGTTIDDAVGEAFDKTAKLLGIEFPGGPQIEVYAKKGDPNKYELPKPIFHKGGCNLSFAGLKTAVLKISKQIKTEQEKYDLAASFQKTIEEILYKKSKIAFEEFKKMNTINKNKFVVAGGVAANKRIREVLTNLCKEEEFEAIFPPINLCGDNAAMIAMVGLEKFKLKQFSELDSPAKPRWPLDADAAFLKGAGVRL</sequence>
<proteinExistence type="inferred from homology"/>
<feature type="chain" id="PRO_0000303468" description="tRNA N6-adenosine threonylcarbamoyltransferase">
    <location>
        <begin position="1"/>
        <end position="357"/>
    </location>
</feature>
<feature type="binding site" evidence="1">
    <location>
        <position position="119"/>
    </location>
    <ligand>
        <name>Fe cation</name>
        <dbReference type="ChEBI" id="CHEBI:24875"/>
    </ligand>
</feature>
<feature type="binding site" evidence="1">
    <location>
        <position position="123"/>
    </location>
    <ligand>
        <name>Fe cation</name>
        <dbReference type="ChEBI" id="CHEBI:24875"/>
    </ligand>
</feature>
<feature type="binding site" evidence="1">
    <location>
        <begin position="141"/>
        <end position="145"/>
    </location>
    <ligand>
        <name>substrate</name>
    </ligand>
</feature>
<feature type="binding site" evidence="1">
    <location>
        <position position="174"/>
    </location>
    <ligand>
        <name>substrate</name>
    </ligand>
</feature>
<feature type="binding site" evidence="1">
    <location>
        <position position="187"/>
    </location>
    <ligand>
        <name>substrate</name>
    </ligand>
</feature>
<feature type="binding site" evidence="1">
    <location>
        <position position="284"/>
    </location>
    <ligand>
        <name>substrate</name>
    </ligand>
</feature>
<feature type="binding site" evidence="1">
    <location>
        <position position="312"/>
    </location>
    <ligand>
        <name>Fe cation</name>
        <dbReference type="ChEBI" id="CHEBI:24875"/>
    </ligand>
</feature>
<accession>Q4FNV6</accession>
<comment type="function">
    <text evidence="1">Required for the formation of a threonylcarbamoyl group on adenosine at position 37 (t(6)A37) in tRNAs that read codons beginning with adenine. Is involved in the transfer of the threonylcarbamoyl moiety of threonylcarbamoyl-AMP (TC-AMP) to the N6 group of A37, together with TsaE and TsaB. TsaD likely plays a direct catalytic role in this reaction.</text>
</comment>
<comment type="catalytic activity">
    <reaction evidence="1">
        <text>L-threonylcarbamoyladenylate + adenosine(37) in tRNA = N(6)-L-threonylcarbamoyladenosine(37) in tRNA + AMP + H(+)</text>
        <dbReference type="Rhea" id="RHEA:37059"/>
        <dbReference type="Rhea" id="RHEA-COMP:10162"/>
        <dbReference type="Rhea" id="RHEA-COMP:10163"/>
        <dbReference type="ChEBI" id="CHEBI:15378"/>
        <dbReference type="ChEBI" id="CHEBI:73682"/>
        <dbReference type="ChEBI" id="CHEBI:74411"/>
        <dbReference type="ChEBI" id="CHEBI:74418"/>
        <dbReference type="ChEBI" id="CHEBI:456215"/>
        <dbReference type="EC" id="2.3.1.234"/>
    </reaction>
</comment>
<comment type="cofactor">
    <cofactor evidence="1">
        <name>Fe(2+)</name>
        <dbReference type="ChEBI" id="CHEBI:29033"/>
    </cofactor>
    <text evidence="1">Binds 1 Fe(2+) ion per subunit.</text>
</comment>
<comment type="subcellular location">
    <subcellularLocation>
        <location evidence="1">Cytoplasm</location>
    </subcellularLocation>
</comment>
<comment type="similarity">
    <text evidence="1">Belongs to the KAE1 / TsaD family.</text>
</comment>
<keyword id="KW-0012">Acyltransferase</keyword>
<keyword id="KW-0963">Cytoplasm</keyword>
<keyword id="KW-0408">Iron</keyword>
<keyword id="KW-0479">Metal-binding</keyword>
<keyword id="KW-1185">Reference proteome</keyword>
<keyword id="KW-0808">Transferase</keyword>
<keyword id="KW-0819">tRNA processing</keyword>
<evidence type="ECO:0000255" key="1">
    <source>
        <dbReference type="HAMAP-Rule" id="MF_01445"/>
    </source>
</evidence>
<gene>
    <name evidence="1" type="primary">tsaD</name>
    <name type="synonym">gcp</name>
    <name type="ordered locus">SAR11_0311</name>
</gene>
<organism>
    <name type="scientific">Pelagibacter ubique (strain HTCC1062)</name>
    <dbReference type="NCBI Taxonomy" id="335992"/>
    <lineage>
        <taxon>Bacteria</taxon>
        <taxon>Pseudomonadati</taxon>
        <taxon>Pseudomonadota</taxon>
        <taxon>Alphaproteobacteria</taxon>
        <taxon>Candidatus Pelagibacterales</taxon>
        <taxon>Candidatus Pelagibacteraceae</taxon>
        <taxon>Candidatus Pelagibacter</taxon>
    </lineage>
</organism>
<reference key="1">
    <citation type="journal article" date="2005" name="Science">
        <title>Genome streamlining in a cosmopolitan oceanic bacterium.</title>
        <authorList>
            <person name="Giovannoni S.J."/>
            <person name="Tripp H.J."/>
            <person name="Givan S."/>
            <person name="Podar M."/>
            <person name="Vergin K.L."/>
            <person name="Baptista D."/>
            <person name="Bibbs L."/>
            <person name="Eads J."/>
            <person name="Richardson T.H."/>
            <person name="Noordewier M."/>
            <person name="Rappe M.S."/>
            <person name="Short J.M."/>
            <person name="Carrington J.C."/>
            <person name="Mathur E.J."/>
        </authorList>
    </citation>
    <scope>NUCLEOTIDE SEQUENCE [LARGE SCALE GENOMIC DNA]</scope>
    <source>
        <strain>HTCC1062</strain>
    </source>
</reference>
<dbReference type="EC" id="2.3.1.234" evidence="1"/>
<dbReference type="EMBL" id="CP000084">
    <property type="protein sequence ID" value="AAZ21133.1"/>
    <property type="molecule type" value="Genomic_DNA"/>
</dbReference>
<dbReference type="RefSeq" id="WP_011281622.1">
    <property type="nucleotide sequence ID" value="NC_007205.1"/>
</dbReference>
<dbReference type="SMR" id="Q4FNV6"/>
<dbReference type="STRING" id="335992.SAR11_0311"/>
<dbReference type="GeneID" id="66294808"/>
<dbReference type="KEGG" id="pub:SAR11_0311"/>
<dbReference type="eggNOG" id="COG0533">
    <property type="taxonomic scope" value="Bacteria"/>
</dbReference>
<dbReference type="HOGENOM" id="CLU_023208_0_2_5"/>
<dbReference type="OrthoDB" id="9806197at2"/>
<dbReference type="Proteomes" id="UP000002528">
    <property type="component" value="Chromosome"/>
</dbReference>
<dbReference type="GO" id="GO:0005737">
    <property type="term" value="C:cytoplasm"/>
    <property type="evidence" value="ECO:0007669"/>
    <property type="project" value="UniProtKB-SubCell"/>
</dbReference>
<dbReference type="GO" id="GO:0005506">
    <property type="term" value="F:iron ion binding"/>
    <property type="evidence" value="ECO:0007669"/>
    <property type="project" value="UniProtKB-UniRule"/>
</dbReference>
<dbReference type="GO" id="GO:0061711">
    <property type="term" value="F:N(6)-L-threonylcarbamoyladenine synthase activity"/>
    <property type="evidence" value="ECO:0007669"/>
    <property type="project" value="UniProtKB-EC"/>
</dbReference>
<dbReference type="GO" id="GO:0002949">
    <property type="term" value="P:tRNA threonylcarbamoyladenosine modification"/>
    <property type="evidence" value="ECO:0007669"/>
    <property type="project" value="UniProtKB-UniRule"/>
</dbReference>
<dbReference type="CDD" id="cd24133">
    <property type="entry name" value="ASKHA_NBD_TsaD_bac"/>
    <property type="match status" value="1"/>
</dbReference>
<dbReference type="FunFam" id="3.30.420.40:FF:000012">
    <property type="entry name" value="tRNA N6-adenosine threonylcarbamoyltransferase"/>
    <property type="match status" value="1"/>
</dbReference>
<dbReference type="FunFam" id="3.30.420.40:FF:000040">
    <property type="entry name" value="tRNA N6-adenosine threonylcarbamoyltransferase"/>
    <property type="match status" value="1"/>
</dbReference>
<dbReference type="Gene3D" id="3.30.420.40">
    <property type="match status" value="2"/>
</dbReference>
<dbReference type="HAMAP" id="MF_01445">
    <property type="entry name" value="TsaD"/>
    <property type="match status" value="1"/>
</dbReference>
<dbReference type="InterPro" id="IPR043129">
    <property type="entry name" value="ATPase_NBD"/>
</dbReference>
<dbReference type="InterPro" id="IPR000905">
    <property type="entry name" value="Gcp-like_dom"/>
</dbReference>
<dbReference type="InterPro" id="IPR017861">
    <property type="entry name" value="KAE1/TsaD"/>
</dbReference>
<dbReference type="InterPro" id="IPR017860">
    <property type="entry name" value="Peptidase_M22_CS"/>
</dbReference>
<dbReference type="InterPro" id="IPR022450">
    <property type="entry name" value="TsaD"/>
</dbReference>
<dbReference type="NCBIfam" id="TIGR00329">
    <property type="entry name" value="gcp_kae1"/>
    <property type="match status" value="1"/>
</dbReference>
<dbReference type="NCBIfam" id="TIGR03723">
    <property type="entry name" value="T6A_TsaD_YgjD"/>
    <property type="match status" value="1"/>
</dbReference>
<dbReference type="PANTHER" id="PTHR11735">
    <property type="entry name" value="TRNA N6-ADENOSINE THREONYLCARBAMOYLTRANSFERASE"/>
    <property type="match status" value="1"/>
</dbReference>
<dbReference type="PANTHER" id="PTHR11735:SF6">
    <property type="entry name" value="TRNA N6-ADENOSINE THREONYLCARBAMOYLTRANSFERASE, MITOCHONDRIAL"/>
    <property type="match status" value="1"/>
</dbReference>
<dbReference type="Pfam" id="PF00814">
    <property type="entry name" value="TsaD"/>
    <property type="match status" value="1"/>
</dbReference>
<dbReference type="PRINTS" id="PR00789">
    <property type="entry name" value="OSIALOPTASE"/>
</dbReference>
<dbReference type="SUPFAM" id="SSF53067">
    <property type="entry name" value="Actin-like ATPase domain"/>
    <property type="match status" value="2"/>
</dbReference>
<dbReference type="PROSITE" id="PS01016">
    <property type="entry name" value="GLYCOPROTEASE"/>
    <property type="match status" value="1"/>
</dbReference>
<protein>
    <recommendedName>
        <fullName evidence="1">tRNA N6-adenosine threonylcarbamoyltransferase</fullName>
        <ecNumber evidence="1">2.3.1.234</ecNumber>
    </recommendedName>
    <alternativeName>
        <fullName evidence="1">N6-L-threonylcarbamoyladenine synthase</fullName>
        <shortName evidence="1">t(6)A synthase</shortName>
    </alternativeName>
    <alternativeName>
        <fullName evidence="1">t(6)A37 threonylcarbamoyladenosine biosynthesis protein TsaD</fullName>
    </alternativeName>
    <alternativeName>
        <fullName evidence="1">tRNA threonylcarbamoyladenosine biosynthesis protein TsaD</fullName>
    </alternativeName>
</protein>